<gene>
    <name type="primary">CYP2C41</name>
</gene>
<name>CP241_CANLF</name>
<sequence length="489" mass="55499">MDPVVVLVLCLSCCLLLSLWKQSSRKGKLPPGPTPLPFIGNILQLDKDINKSLSNLSKAYGPVFTLYFGMKPTVVLHGYDAVKETLIDLGEEFSARGRFPIAEKVSGGHGIIFTSGNRWKEMRRFALTTLRNLGMGKSDLESRVQEEACYLVEELRKTNALPCDPTFVLGCASCNVICSIIFQNRFDYTDQTLIGFLEKLNENFRILSSPWIQAYNSFPALLHYLPGSHNTIFKNFAFIKSYILEKIKEHQESFDVNNPRDFIDYFLIKMEQEKHNQPLEFTFENLKTIATDLFGAGTETTSTTLRYGLLLLLKHPEVTVKVQEEIDRVIGRHQSPHMQDRSRMPYTNAVLHEIQRYIDLVPNSLPHAVTCDVKFRNYVIPKGTTILISLSSVLSDEKEFPRPEIFDPAHFLDDSGNFKKSDYFMAFSAGKRICVGEGLARMELFLFLTTILQKFTLKPLVDPKDIDTTPLASGFGHVPPTYQLCFIPV</sequence>
<comment type="function">
    <text>Cytochromes P450 are a group of heme-thiolate monooxygenases. In liver microsomes, this enzyme is involved in an NADPH-dependent electron transport pathway. It oxidizes a variety of structurally unrelated compounds, including steroids, fatty acids, and xenobiotics.</text>
</comment>
<comment type="catalytic activity">
    <reaction>
        <text>an organic molecule + reduced [NADPH--hemoprotein reductase] + O2 = an alcohol + oxidized [NADPH--hemoprotein reductase] + H2O + H(+)</text>
        <dbReference type="Rhea" id="RHEA:17149"/>
        <dbReference type="Rhea" id="RHEA-COMP:11964"/>
        <dbReference type="Rhea" id="RHEA-COMP:11965"/>
        <dbReference type="ChEBI" id="CHEBI:15377"/>
        <dbReference type="ChEBI" id="CHEBI:15378"/>
        <dbReference type="ChEBI" id="CHEBI:15379"/>
        <dbReference type="ChEBI" id="CHEBI:30879"/>
        <dbReference type="ChEBI" id="CHEBI:57618"/>
        <dbReference type="ChEBI" id="CHEBI:58210"/>
        <dbReference type="ChEBI" id="CHEBI:142491"/>
        <dbReference type="EC" id="1.14.14.1"/>
    </reaction>
</comment>
<comment type="cofactor">
    <cofactor evidence="1">
        <name>heme</name>
        <dbReference type="ChEBI" id="CHEBI:30413"/>
    </cofactor>
</comment>
<comment type="subcellular location">
    <subcellularLocation>
        <location>Endoplasmic reticulum membrane</location>
        <topology>Peripheral membrane protein</topology>
    </subcellularLocation>
    <subcellularLocation>
        <location>Microsome membrane</location>
        <topology>Peripheral membrane protein</topology>
    </subcellularLocation>
</comment>
<comment type="induction">
    <text>P450 can be induced to high levels in liver and other tissues by various foreign compounds, including drugs, pesticides, and carcinogens.</text>
</comment>
<comment type="similarity">
    <text evidence="2">Belongs to the cytochrome P450 family.</text>
</comment>
<feature type="chain" id="PRO_0000051724" description="Cytochrome P450 2C41">
    <location>
        <begin position="1"/>
        <end position="489"/>
    </location>
</feature>
<feature type="binding site" description="axial binding residue" evidence="1">
    <location>
        <position position="434"/>
    </location>
    <ligand>
        <name>heme</name>
        <dbReference type="ChEBI" id="CHEBI:30413"/>
    </ligand>
    <ligandPart>
        <name>Fe</name>
        <dbReference type="ChEBI" id="CHEBI:18248"/>
    </ligandPart>
</feature>
<proteinExistence type="evidence at transcript level"/>
<evidence type="ECO:0000250" key="1"/>
<evidence type="ECO:0000305" key="2"/>
<organism>
    <name type="scientific">Canis lupus familiaris</name>
    <name type="common">Dog</name>
    <name type="synonym">Canis familiaris</name>
    <dbReference type="NCBI Taxonomy" id="9615"/>
    <lineage>
        <taxon>Eukaryota</taxon>
        <taxon>Metazoa</taxon>
        <taxon>Chordata</taxon>
        <taxon>Craniata</taxon>
        <taxon>Vertebrata</taxon>
        <taxon>Euteleostomi</taxon>
        <taxon>Mammalia</taxon>
        <taxon>Eutheria</taxon>
        <taxon>Laurasiatheria</taxon>
        <taxon>Carnivora</taxon>
        <taxon>Caniformia</taxon>
        <taxon>Canidae</taxon>
        <taxon>Canis</taxon>
    </lineage>
</organism>
<protein>
    <recommendedName>
        <fullName>Cytochrome P450 2C41</fullName>
        <ecNumber>1.14.14.1</ecNumber>
    </recommendedName>
    <alternativeName>
        <fullName>CYPIIC41</fullName>
    </alternativeName>
</protein>
<keyword id="KW-0256">Endoplasmic reticulum</keyword>
<keyword id="KW-0349">Heme</keyword>
<keyword id="KW-0408">Iron</keyword>
<keyword id="KW-0472">Membrane</keyword>
<keyword id="KW-0479">Metal-binding</keyword>
<keyword id="KW-0492">Microsome</keyword>
<keyword id="KW-0503">Monooxygenase</keyword>
<keyword id="KW-0560">Oxidoreductase</keyword>
<keyword id="KW-1185">Reference proteome</keyword>
<reference key="1">
    <citation type="journal article" date="1998" name="Drug Metab. Dispos.">
        <title>Isolation of a new canine cytochrome P450 cDNA from the cytochrome P450 2C subfamily (CYP2C41) and evidence for polymorphic differences in its expression.</title>
        <authorList>
            <person name="Blaisdell J."/>
            <person name="Goldstein J.A."/>
            <person name="Bai S.A."/>
        </authorList>
    </citation>
    <scope>NUCLEOTIDE SEQUENCE [MRNA]</scope>
    <source>
        <tissue>Liver</tissue>
    </source>
</reference>
<dbReference type="EC" id="1.14.14.1"/>
<dbReference type="EMBL" id="AF016248">
    <property type="protein sequence ID" value="AAC08738.1"/>
    <property type="molecule type" value="mRNA"/>
</dbReference>
<dbReference type="RefSeq" id="NP_001003334.1">
    <property type="nucleotide sequence ID" value="NM_001003334.1"/>
</dbReference>
<dbReference type="SMR" id="O62671"/>
<dbReference type="FunCoup" id="O62671">
    <property type="interactions" value="59"/>
</dbReference>
<dbReference type="GeneID" id="415123"/>
<dbReference type="KEGG" id="ag:AAC08738"/>
<dbReference type="CTD" id="415123"/>
<dbReference type="InParanoid" id="O62671"/>
<dbReference type="Proteomes" id="UP000002254">
    <property type="component" value="Unplaced"/>
</dbReference>
<dbReference type="Proteomes" id="UP000694429">
    <property type="component" value="Unplaced"/>
</dbReference>
<dbReference type="Proteomes" id="UP000694542">
    <property type="component" value="Unplaced"/>
</dbReference>
<dbReference type="Proteomes" id="UP000805418">
    <property type="component" value="Unplaced"/>
</dbReference>
<dbReference type="GO" id="GO:0005737">
    <property type="term" value="C:cytoplasm"/>
    <property type="evidence" value="ECO:0000318"/>
    <property type="project" value="GO_Central"/>
</dbReference>
<dbReference type="GO" id="GO:0005789">
    <property type="term" value="C:endoplasmic reticulum membrane"/>
    <property type="evidence" value="ECO:0007669"/>
    <property type="project" value="UniProtKB-SubCell"/>
</dbReference>
<dbReference type="GO" id="GO:0043231">
    <property type="term" value="C:intracellular membrane-bounded organelle"/>
    <property type="evidence" value="ECO:0000318"/>
    <property type="project" value="GO_Central"/>
</dbReference>
<dbReference type="GO" id="GO:0020037">
    <property type="term" value="F:heme binding"/>
    <property type="evidence" value="ECO:0000318"/>
    <property type="project" value="GO_Central"/>
</dbReference>
<dbReference type="GO" id="GO:0005506">
    <property type="term" value="F:iron ion binding"/>
    <property type="evidence" value="ECO:0007669"/>
    <property type="project" value="InterPro"/>
</dbReference>
<dbReference type="GO" id="GO:0016712">
    <property type="term" value="F:oxidoreductase activity, acting on paired donors, with incorporation or reduction of molecular oxygen, reduced flavin or flavoprotein as one donor, and incorporation of one atom of oxygen"/>
    <property type="evidence" value="ECO:0000318"/>
    <property type="project" value="GO_Central"/>
</dbReference>
<dbReference type="GO" id="GO:0006082">
    <property type="term" value="P:organic acid metabolic process"/>
    <property type="evidence" value="ECO:0000318"/>
    <property type="project" value="GO_Central"/>
</dbReference>
<dbReference type="GO" id="GO:0006805">
    <property type="term" value="P:xenobiotic metabolic process"/>
    <property type="evidence" value="ECO:0000318"/>
    <property type="project" value="GO_Central"/>
</dbReference>
<dbReference type="CDD" id="cd20665">
    <property type="entry name" value="CYP2C-like"/>
    <property type="match status" value="1"/>
</dbReference>
<dbReference type="FunFam" id="1.10.630.10:FF:000299">
    <property type="entry name" value="Cytochrome P450 2C9"/>
    <property type="match status" value="1"/>
</dbReference>
<dbReference type="Gene3D" id="1.10.630.10">
    <property type="entry name" value="Cytochrome P450"/>
    <property type="match status" value="1"/>
</dbReference>
<dbReference type="InterPro" id="IPR001128">
    <property type="entry name" value="Cyt_P450"/>
</dbReference>
<dbReference type="InterPro" id="IPR017972">
    <property type="entry name" value="Cyt_P450_CS"/>
</dbReference>
<dbReference type="InterPro" id="IPR002401">
    <property type="entry name" value="Cyt_P450_E_grp-I"/>
</dbReference>
<dbReference type="InterPro" id="IPR036396">
    <property type="entry name" value="Cyt_P450_sf"/>
</dbReference>
<dbReference type="InterPro" id="IPR050182">
    <property type="entry name" value="Cytochrome_P450_fam2"/>
</dbReference>
<dbReference type="PANTHER" id="PTHR24300:SF423">
    <property type="entry name" value="CYTOCHROME P450 2C18"/>
    <property type="match status" value="1"/>
</dbReference>
<dbReference type="PANTHER" id="PTHR24300">
    <property type="entry name" value="CYTOCHROME P450 508A4-RELATED"/>
    <property type="match status" value="1"/>
</dbReference>
<dbReference type="Pfam" id="PF00067">
    <property type="entry name" value="p450"/>
    <property type="match status" value="1"/>
</dbReference>
<dbReference type="PRINTS" id="PR00463">
    <property type="entry name" value="EP450I"/>
</dbReference>
<dbReference type="PRINTS" id="PR00385">
    <property type="entry name" value="P450"/>
</dbReference>
<dbReference type="SUPFAM" id="SSF48264">
    <property type="entry name" value="Cytochrome P450"/>
    <property type="match status" value="1"/>
</dbReference>
<dbReference type="PROSITE" id="PS00086">
    <property type="entry name" value="CYTOCHROME_P450"/>
    <property type="match status" value="1"/>
</dbReference>
<accession>O62671</accession>